<keyword id="KW-0269">Exonuclease</keyword>
<keyword id="KW-0378">Hydrolase</keyword>
<keyword id="KW-0540">Nuclease</keyword>
<protein>
    <recommendedName>
        <fullName evidence="1">3'-5' exoribonuclease YhaM</fullName>
        <ecNumber evidence="1">3.1.-.-</ecNumber>
    </recommendedName>
</protein>
<reference key="1">
    <citation type="submission" date="2009-06" db="EMBL/GenBank/DDBJ databases">
        <title>Complete sequence of chromosome of Geopacillus sp. WCH70.</title>
        <authorList>
            <consortium name="US DOE Joint Genome Institute"/>
            <person name="Lucas S."/>
            <person name="Copeland A."/>
            <person name="Lapidus A."/>
            <person name="Glavina del Rio T."/>
            <person name="Dalin E."/>
            <person name="Tice H."/>
            <person name="Bruce D."/>
            <person name="Goodwin L."/>
            <person name="Pitluck S."/>
            <person name="Chertkov O."/>
            <person name="Brettin T."/>
            <person name="Detter J.C."/>
            <person name="Han C."/>
            <person name="Larimer F."/>
            <person name="Land M."/>
            <person name="Hauser L."/>
            <person name="Kyrpides N."/>
            <person name="Mikhailova N."/>
            <person name="Brumm P."/>
            <person name="Mead D.A."/>
            <person name="Richardson P."/>
        </authorList>
    </citation>
    <scope>NUCLEOTIDE SEQUENCE [LARGE SCALE GENOMIC DNA]</scope>
    <source>
        <strain>WCH70</strain>
    </source>
</reference>
<sequence length="324" mass="36580">MAKGIVHYEVGEQVDVYLLIKSVTKGIASNGKPFLTLILQDKTGDIEAKLWDVSPEDESVYVPESIVKVLGDIHNYRGKMQLKIRSIRLAHEGDAVRVSDFLETAPMKREDMMEKITEYIFAMQNPNIQRITRYLLKKYEQKFFDYPAATKNHHEFISGLAYHVVSMLELAKALVNLYPSLNRDLLYAGVILHDLGKVIELSGPVSASYTLEGKLLGHIPIMVGEISKAAEHLGISGEEIVVLQHMVLSHHGKAEWGSPKPPMVKEAEILHYIDNLDAKMNMIDRALEKVKPGEFTERIYALENRSFYKPIFSSVLMQERGGTS</sequence>
<name>YHAM_GEOSW</name>
<accession>C5D6L2</accession>
<comment type="function">
    <text evidence="1">Shows a 3'-5' exoribonuclease activity.</text>
</comment>
<comment type="similarity">
    <text evidence="1">Belongs to the YhaM family.</text>
</comment>
<organism>
    <name type="scientific">Geobacillus sp. (strain WCH70)</name>
    <dbReference type="NCBI Taxonomy" id="471223"/>
    <lineage>
        <taxon>Bacteria</taxon>
        <taxon>Bacillati</taxon>
        <taxon>Bacillota</taxon>
        <taxon>Bacilli</taxon>
        <taxon>Bacillales</taxon>
        <taxon>Anoxybacillaceae</taxon>
        <taxon>Geobacillus</taxon>
    </lineage>
</organism>
<feature type="chain" id="PRO_1000215268" description="3'-5' exoribonuclease YhaM">
    <location>
        <begin position="1"/>
        <end position="324"/>
    </location>
</feature>
<feature type="domain" description="HD" evidence="2">
    <location>
        <begin position="163"/>
        <end position="279"/>
    </location>
</feature>
<evidence type="ECO:0000255" key="1">
    <source>
        <dbReference type="HAMAP-Rule" id="MF_01427"/>
    </source>
</evidence>
<evidence type="ECO:0000255" key="2">
    <source>
        <dbReference type="PROSITE-ProRule" id="PRU01175"/>
    </source>
</evidence>
<dbReference type="EC" id="3.1.-.-" evidence="1"/>
<dbReference type="EMBL" id="CP001638">
    <property type="protein sequence ID" value="ACS23529.1"/>
    <property type="molecule type" value="Genomic_DNA"/>
</dbReference>
<dbReference type="SMR" id="C5D6L2"/>
<dbReference type="STRING" id="471223.GWCH70_0636"/>
<dbReference type="KEGG" id="gwc:GWCH70_0636"/>
<dbReference type="eggNOG" id="COG3481">
    <property type="taxonomic scope" value="Bacteria"/>
</dbReference>
<dbReference type="HOGENOM" id="CLU_056349_2_0_9"/>
<dbReference type="OrthoDB" id="9778453at2"/>
<dbReference type="GO" id="GO:0000175">
    <property type="term" value="F:3'-5'-RNA exonuclease activity"/>
    <property type="evidence" value="ECO:0007669"/>
    <property type="project" value="UniProtKB-UniRule"/>
</dbReference>
<dbReference type="GO" id="GO:0003676">
    <property type="term" value="F:nucleic acid binding"/>
    <property type="evidence" value="ECO:0007669"/>
    <property type="project" value="InterPro"/>
</dbReference>
<dbReference type="GO" id="GO:0031125">
    <property type="term" value="P:rRNA 3'-end processing"/>
    <property type="evidence" value="ECO:0007669"/>
    <property type="project" value="TreeGrafter"/>
</dbReference>
<dbReference type="CDD" id="cd00077">
    <property type="entry name" value="HDc"/>
    <property type="match status" value="1"/>
</dbReference>
<dbReference type="CDD" id="cd04492">
    <property type="entry name" value="YhaM_OBF_like"/>
    <property type="match status" value="1"/>
</dbReference>
<dbReference type="FunFam" id="1.10.3210.10:FF:000008">
    <property type="entry name" value="3'-5' exoribonuclease YhaM"/>
    <property type="match status" value="1"/>
</dbReference>
<dbReference type="Gene3D" id="1.10.3210.10">
    <property type="entry name" value="Hypothetical protein af1432"/>
    <property type="match status" value="1"/>
</dbReference>
<dbReference type="Gene3D" id="2.40.50.140">
    <property type="entry name" value="Nucleic acid-binding proteins"/>
    <property type="match status" value="1"/>
</dbReference>
<dbReference type="HAMAP" id="MF_01427">
    <property type="entry name" value="3_5_Exoribonuc_YhaM"/>
    <property type="match status" value="1"/>
</dbReference>
<dbReference type="InterPro" id="IPR020873">
    <property type="entry name" value="3'-5'_exoribonuclease_YhaM"/>
</dbReference>
<dbReference type="InterPro" id="IPR003607">
    <property type="entry name" value="HD/PDEase_dom"/>
</dbReference>
<dbReference type="InterPro" id="IPR006674">
    <property type="entry name" value="HD_domain"/>
</dbReference>
<dbReference type="InterPro" id="IPR012340">
    <property type="entry name" value="NA-bd_OB-fold"/>
</dbReference>
<dbReference type="InterPro" id="IPR004365">
    <property type="entry name" value="NA-bd_OB_tRNA"/>
</dbReference>
<dbReference type="InterPro" id="IPR050798">
    <property type="entry name" value="YhaM_exoribonuc/phosphodiest"/>
</dbReference>
<dbReference type="NCBIfam" id="NF010007">
    <property type="entry name" value="PRK13480.1"/>
    <property type="match status" value="1"/>
</dbReference>
<dbReference type="PANTHER" id="PTHR37294">
    <property type="entry name" value="3'-5' EXORIBONUCLEASE YHAM"/>
    <property type="match status" value="1"/>
</dbReference>
<dbReference type="PANTHER" id="PTHR37294:SF1">
    <property type="entry name" value="3'-5' EXORIBONUCLEASE YHAM"/>
    <property type="match status" value="1"/>
</dbReference>
<dbReference type="Pfam" id="PF01966">
    <property type="entry name" value="HD"/>
    <property type="match status" value="1"/>
</dbReference>
<dbReference type="Pfam" id="PF01336">
    <property type="entry name" value="tRNA_anti-codon"/>
    <property type="match status" value="1"/>
</dbReference>
<dbReference type="SMART" id="SM00471">
    <property type="entry name" value="HDc"/>
    <property type="match status" value="1"/>
</dbReference>
<dbReference type="SUPFAM" id="SSF109604">
    <property type="entry name" value="HD-domain/PDEase-like"/>
    <property type="match status" value="1"/>
</dbReference>
<dbReference type="SUPFAM" id="SSF50249">
    <property type="entry name" value="Nucleic acid-binding proteins"/>
    <property type="match status" value="1"/>
</dbReference>
<dbReference type="PROSITE" id="PS51831">
    <property type="entry name" value="HD"/>
    <property type="match status" value="1"/>
</dbReference>
<gene>
    <name evidence="1" type="primary">yhaM</name>
    <name type="ordered locus">GWCH70_0636</name>
</gene>
<proteinExistence type="inferred from homology"/>